<proteinExistence type="inferred from homology"/>
<evidence type="ECO:0000250" key="1"/>
<evidence type="ECO:0000250" key="2">
    <source>
        <dbReference type="UniProtKB" id="Q8VD46"/>
    </source>
</evidence>
<protein>
    <recommendedName>
        <fullName>Ankyrin repeat, SAM and basic leucine zipper domain-containing protein 1</fullName>
    </recommendedName>
    <alternativeName>
        <fullName>Germ cell-specific ankyrin, SAM and basic leucine zipper domain-containing protein</fullName>
    </alternativeName>
</protein>
<dbReference type="EMBL" id="DP000028">
    <property type="protein sequence ID" value="ABC87479.1"/>
    <property type="molecule type" value="Genomic_DNA"/>
</dbReference>
<dbReference type="SMR" id="Q2IBB4"/>
<dbReference type="FunCoup" id="Q2IBB4">
    <property type="interactions" value="65"/>
</dbReference>
<dbReference type="InParanoid" id="Q2IBB4"/>
<dbReference type="Proteomes" id="UP000472240">
    <property type="component" value="Unplaced"/>
</dbReference>
<dbReference type="GO" id="GO:0071546">
    <property type="term" value="C:pi-body"/>
    <property type="evidence" value="ECO:0000250"/>
    <property type="project" value="UniProtKB"/>
</dbReference>
<dbReference type="GO" id="GO:0030154">
    <property type="term" value="P:cell differentiation"/>
    <property type="evidence" value="ECO:0007669"/>
    <property type="project" value="UniProtKB-KW"/>
</dbReference>
<dbReference type="GO" id="GO:0007140">
    <property type="term" value="P:male meiotic nuclear division"/>
    <property type="evidence" value="ECO:0000250"/>
    <property type="project" value="UniProtKB"/>
</dbReference>
<dbReference type="GO" id="GO:0031047">
    <property type="term" value="P:regulatory ncRNA-mediated gene silencing"/>
    <property type="evidence" value="ECO:0007669"/>
    <property type="project" value="UniProtKB-KW"/>
</dbReference>
<dbReference type="GO" id="GO:0007283">
    <property type="term" value="P:spermatogenesis"/>
    <property type="evidence" value="ECO:0000250"/>
    <property type="project" value="UniProtKB"/>
</dbReference>
<dbReference type="GO" id="GO:0010526">
    <property type="term" value="P:transposable element silencing"/>
    <property type="evidence" value="ECO:0000250"/>
    <property type="project" value="UniProtKB"/>
</dbReference>
<dbReference type="CDD" id="cd09521">
    <property type="entry name" value="SAM_ASZ1"/>
    <property type="match status" value="1"/>
</dbReference>
<dbReference type="FunFam" id="1.25.40.20:FF:000192">
    <property type="entry name" value="Ankyrin repeat, SAM and basic leucine zipper domain-containing 1"/>
    <property type="match status" value="1"/>
</dbReference>
<dbReference type="FunFam" id="1.10.150.50:FF:000060">
    <property type="entry name" value="Ankyrin repeat, SAM and basic leucine zipper domain-containing protein 1"/>
    <property type="match status" value="1"/>
</dbReference>
<dbReference type="Gene3D" id="1.25.40.20">
    <property type="entry name" value="Ankyrin repeat-containing domain"/>
    <property type="match status" value="1"/>
</dbReference>
<dbReference type="Gene3D" id="1.10.150.50">
    <property type="entry name" value="Transcription Factor, Ets-1"/>
    <property type="match status" value="1"/>
</dbReference>
<dbReference type="InterPro" id="IPR002110">
    <property type="entry name" value="Ankyrin_rpt"/>
</dbReference>
<dbReference type="InterPro" id="IPR036770">
    <property type="entry name" value="Ankyrin_rpt-contain_sf"/>
</dbReference>
<dbReference type="InterPro" id="IPR042650">
    <property type="entry name" value="Asz1_SAM"/>
</dbReference>
<dbReference type="InterPro" id="IPR001660">
    <property type="entry name" value="SAM"/>
</dbReference>
<dbReference type="InterPro" id="IPR013761">
    <property type="entry name" value="SAM/pointed_sf"/>
</dbReference>
<dbReference type="PANTHER" id="PTHR24157">
    <property type="entry name" value="ANKYRIN REPEAT, SAM AND BASIC LEUCINE ZIPPER DOMAIN-CONTAINING PROTEIN 1"/>
    <property type="match status" value="1"/>
</dbReference>
<dbReference type="PANTHER" id="PTHR24157:SF3">
    <property type="entry name" value="ANKYRIN REPEAT, SAM AND BASIC LEUCINE ZIPPER DOMAIN-CONTAINING PROTEIN 1"/>
    <property type="match status" value="1"/>
</dbReference>
<dbReference type="Pfam" id="PF12796">
    <property type="entry name" value="Ank_2"/>
    <property type="match status" value="1"/>
</dbReference>
<dbReference type="Pfam" id="PF13637">
    <property type="entry name" value="Ank_4"/>
    <property type="match status" value="1"/>
</dbReference>
<dbReference type="Pfam" id="PF07647">
    <property type="entry name" value="SAM_2"/>
    <property type="match status" value="1"/>
</dbReference>
<dbReference type="PRINTS" id="PR01415">
    <property type="entry name" value="ANKYRIN"/>
</dbReference>
<dbReference type="SMART" id="SM00248">
    <property type="entry name" value="ANK"/>
    <property type="match status" value="5"/>
</dbReference>
<dbReference type="SUPFAM" id="SSF48403">
    <property type="entry name" value="Ankyrin repeat"/>
    <property type="match status" value="1"/>
</dbReference>
<dbReference type="SUPFAM" id="SSF140860">
    <property type="entry name" value="Pseudo ankyrin repeat-like"/>
    <property type="match status" value="1"/>
</dbReference>
<dbReference type="SUPFAM" id="SSF47769">
    <property type="entry name" value="SAM/Pointed domain"/>
    <property type="match status" value="1"/>
</dbReference>
<dbReference type="PROSITE" id="PS50297">
    <property type="entry name" value="ANK_REP_REGION"/>
    <property type="match status" value="1"/>
</dbReference>
<dbReference type="PROSITE" id="PS50088">
    <property type="entry name" value="ANK_REPEAT"/>
    <property type="match status" value="3"/>
</dbReference>
<organism>
    <name type="scientific">Rhinolophus ferrumequinum</name>
    <name type="common">Greater horseshoe bat</name>
    <dbReference type="NCBI Taxonomy" id="59479"/>
    <lineage>
        <taxon>Eukaryota</taxon>
        <taxon>Metazoa</taxon>
        <taxon>Chordata</taxon>
        <taxon>Craniata</taxon>
        <taxon>Vertebrata</taxon>
        <taxon>Euteleostomi</taxon>
        <taxon>Mammalia</taxon>
        <taxon>Eutheria</taxon>
        <taxon>Laurasiatheria</taxon>
        <taxon>Chiroptera</taxon>
        <taxon>Yinpterochiroptera</taxon>
        <taxon>Rhinolophoidea</taxon>
        <taxon>Rhinolophidae</taxon>
        <taxon>Rhinolophinae</taxon>
        <taxon>Rhinolophus</taxon>
    </lineage>
</organism>
<keyword id="KW-0040">ANK repeat</keyword>
<keyword id="KW-0963">Cytoplasm</keyword>
<keyword id="KW-0217">Developmental protein</keyword>
<keyword id="KW-0221">Differentiation</keyword>
<keyword id="KW-0469">Meiosis</keyword>
<keyword id="KW-0597">Phosphoprotein</keyword>
<keyword id="KW-1185">Reference proteome</keyword>
<keyword id="KW-0677">Repeat</keyword>
<keyword id="KW-0943">RNA-mediated gene silencing</keyword>
<keyword id="KW-0744">Spermatogenesis</keyword>
<feature type="chain" id="PRO_0000260398" description="Ankyrin repeat, SAM and basic leucine zipper domain-containing protein 1">
    <location>
        <begin position="1"/>
        <end position="479"/>
    </location>
</feature>
<feature type="repeat" description="ANK 1">
    <location>
        <begin position="49"/>
        <end position="78"/>
    </location>
</feature>
<feature type="repeat" description="ANK 2">
    <location>
        <begin position="82"/>
        <end position="111"/>
    </location>
</feature>
<feature type="repeat" description="ANK 3">
    <location>
        <begin position="114"/>
        <end position="148"/>
    </location>
</feature>
<feature type="repeat" description="ANK 4">
    <location>
        <begin position="152"/>
        <end position="181"/>
    </location>
</feature>
<feature type="repeat" description="ANK 5">
    <location>
        <begin position="185"/>
        <end position="214"/>
    </location>
</feature>
<feature type="repeat" description="ANK 6">
    <location>
        <begin position="218"/>
        <end position="247"/>
    </location>
</feature>
<feature type="domain" description="SAM">
    <location>
        <begin position="276"/>
        <end position="338"/>
    </location>
</feature>
<feature type="modified residue" description="Phosphoserine" evidence="2">
    <location>
        <position position="22"/>
    </location>
</feature>
<feature type="modified residue" description="Phosphoserine" evidence="2">
    <location>
        <position position="24"/>
    </location>
</feature>
<accession>Q2IBB4</accession>
<reference key="1">
    <citation type="submission" date="2006-01" db="EMBL/GenBank/DDBJ databases">
        <title>NISC comparative sequencing initiative.</title>
        <authorList>
            <person name="Antonellis A."/>
            <person name="Ayele K."/>
            <person name="Benjamin B."/>
            <person name="Blakesley R.W."/>
            <person name="Boakye A."/>
            <person name="Bouffard G.G."/>
            <person name="Brinkley C."/>
            <person name="Brooks S."/>
            <person name="Chu G."/>
            <person name="Coleman H."/>
            <person name="Engle J."/>
            <person name="Gestole M."/>
            <person name="Greene A."/>
            <person name="Guan X."/>
            <person name="Gupta J."/>
            <person name="Haghighi P."/>
            <person name="Han J."/>
            <person name="Hansen N."/>
            <person name="Ho S.-L."/>
            <person name="Hu P."/>
            <person name="Hunter G."/>
            <person name="Hurle B."/>
            <person name="Idol J.R."/>
            <person name="Kwong P."/>
            <person name="Laric P."/>
            <person name="Larson S."/>
            <person name="Lee-Lin S.-Q."/>
            <person name="Legaspi R."/>
            <person name="Madden M."/>
            <person name="Maduro Q.L."/>
            <person name="Maduro V.B."/>
            <person name="Margulies E.H."/>
            <person name="Masiello C."/>
            <person name="Maskeri B."/>
            <person name="McDowell J."/>
            <person name="Mojidi H.A."/>
            <person name="Mullikin J.C."/>
            <person name="Oestreicher J.S."/>
            <person name="Park M."/>
            <person name="Portnoy M.E."/>
            <person name="Prasad A."/>
            <person name="Puri O."/>
            <person name="Reddix-Dugue N."/>
            <person name="Schandler K."/>
            <person name="Schueler M.G."/>
            <person name="Sison C."/>
            <person name="Stantripop S."/>
            <person name="Stephen E."/>
            <person name="Taye A."/>
            <person name="Thomas J.W."/>
            <person name="Thomas P.J."/>
            <person name="Tsipouri V."/>
            <person name="Ung L."/>
            <person name="Vogt J.L."/>
            <person name="Wetherby K.D."/>
            <person name="Young A."/>
            <person name="Green E.D."/>
        </authorList>
    </citation>
    <scope>NUCLEOTIDE SEQUENCE [LARGE SCALE GENOMIC DNA]</scope>
</reference>
<sequence>MAAGVAARTLRGLAVAGGGETSDSEDDGWEIGYLDRAAQKLKGPLPTEEKNETFKKALTTGDILLVKELLNSGISVDSSFRYGWTPLMYAASVSNVELVRVLLDRGANASFDKDKQTILITACSARGSEEQILKCVELLLSRNADPNVPCRRLMTPIMYAARDGHTQVVALLVAHGAEVNTQDENGYTALTWAARQGHKNVVLKLLELGANKMLQTKDGKTPSEIAKRNKHVEIFSFLSLTLNPLEGKLQQLTKEETICKLLTTDSDKEKDNIFSSYTALGDLEIFLHGLGLEHMTDLLKERDITLRHLLTMKKDEFTKNGITSRDQQKILDALKELQVDEIKFGELPEVTKLEISGDEFLNFLLKLNKQCRHLITAVQNIITELPVNSHKIVLEWASPRNFTSVCEELISNVEDLNEEVCKLKDLIQKLQNERENDPTHIPLIEEVSTWNSGILKRTALAVCGFGFLLFICKLTFQRK</sequence>
<comment type="function">
    <text evidence="1">Plays a central role during spermatogenesis by repressing transposable elements and preventing their mobilization, which is essential for the germline integrity. Acts via the piRNA metabolic process, which mediates the repression of transposable elements during meiosis by forming complexes composed of piRNAs and Piwi proteins and governs the methylation and subsequent repression of transposons. Its association with pi-bodies suggests a participation in the primary piRNAs metabolic process. Required prior to the pachytene stage to facilitate the production of multiple types of piRNAs, including those associated with repeats involved in the regulation of retrotransposons. May act by mediating protein-protein interactions during germ cell maturation (By similarity).</text>
</comment>
<comment type="subunit">
    <text evidence="1">Interacts with DDX4, PIWIL1, RANBP9 and TDRD1.</text>
</comment>
<comment type="subcellular location">
    <subcellularLocation>
        <location evidence="1">Cytoplasm</location>
    </subcellularLocation>
    <text evidence="1">Component of the meiotic nuage, also named P granule, a germ-cell-specific organelle required to repress transposon activity during meiosis. Specifically localizes to pi-bodies, a subset of the nuage which contains primary piRNAs (By similarity).</text>
</comment>
<name>ASZ1_RHIFE</name>
<gene>
    <name type="primary">ASZ1</name>
    <name type="synonym">GASZ</name>
</gene>